<proteinExistence type="inferred from homology"/>
<evidence type="ECO:0000255" key="1">
    <source>
        <dbReference type="HAMAP-Rule" id="MF_00537"/>
    </source>
</evidence>
<evidence type="ECO:0000305" key="2"/>
<reference key="1">
    <citation type="submission" date="2007-08" db="EMBL/GenBank/DDBJ databases">
        <authorList>
            <consortium name="The Citrobacter koseri Genome Sequencing Project"/>
            <person name="McClelland M."/>
            <person name="Sanderson E.K."/>
            <person name="Porwollik S."/>
            <person name="Spieth J."/>
            <person name="Clifton W.S."/>
            <person name="Latreille P."/>
            <person name="Courtney L."/>
            <person name="Wang C."/>
            <person name="Pepin K."/>
            <person name="Bhonagiri V."/>
            <person name="Nash W."/>
            <person name="Johnson M."/>
            <person name="Thiruvilangam P."/>
            <person name="Wilson R."/>
        </authorList>
    </citation>
    <scope>NUCLEOTIDE SEQUENCE [LARGE SCALE GENOMIC DNA]</scope>
    <source>
        <strain>ATCC BAA-895 / CDC 4225-83 / SGSC4696</strain>
    </source>
</reference>
<gene>
    <name evidence="1" type="primary">rpsN</name>
    <name type="ordered locus">CKO_04721</name>
</gene>
<sequence>MAKQSMKAREVKRVALADKYFAKRAELKAIISDVNASDEDRWNAVLKLQTLPRDSSPSRQRNRCRQTGRPHGYVGKFGLSRIKLREAAMRGEVPGLKKASW</sequence>
<protein>
    <recommendedName>
        <fullName evidence="1">Small ribosomal subunit protein uS14</fullName>
    </recommendedName>
    <alternativeName>
        <fullName evidence="2">30S ribosomal protein S14</fullName>
    </alternativeName>
</protein>
<dbReference type="EMBL" id="CP000822">
    <property type="protein sequence ID" value="ABV15766.1"/>
    <property type="molecule type" value="Genomic_DNA"/>
</dbReference>
<dbReference type="RefSeq" id="WP_012135425.1">
    <property type="nucleotide sequence ID" value="NC_009792.1"/>
</dbReference>
<dbReference type="SMR" id="A8AQK3"/>
<dbReference type="STRING" id="290338.CKO_04721"/>
<dbReference type="GeneID" id="84234850"/>
<dbReference type="KEGG" id="cko:CKO_04721"/>
<dbReference type="HOGENOM" id="CLU_139869_0_1_6"/>
<dbReference type="OrthoDB" id="9810484at2"/>
<dbReference type="Proteomes" id="UP000008148">
    <property type="component" value="Chromosome"/>
</dbReference>
<dbReference type="GO" id="GO:0005737">
    <property type="term" value="C:cytoplasm"/>
    <property type="evidence" value="ECO:0007669"/>
    <property type="project" value="UniProtKB-ARBA"/>
</dbReference>
<dbReference type="GO" id="GO:0015935">
    <property type="term" value="C:small ribosomal subunit"/>
    <property type="evidence" value="ECO:0007669"/>
    <property type="project" value="TreeGrafter"/>
</dbReference>
<dbReference type="GO" id="GO:0019843">
    <property type="term" value="F:rRNA binding"/>
    <property type="evidence" value="ECO:0007669"/>
    <property type="project" value="UniProtKB-UniRule"/>
</dbReference>
<dbReference type="GO" id="GO:0003735">
    <property type="term" value="F:structural constituent of ribosome"/>
    <property type="evidence" value="ECO:0007669"/>
    <property type="project" value="InterPro"/>
</dbReference>
<dbReference type="GO" id="GO:0006412">
    <property type="term" value="P:translation"/>
    <property type="evidence" value="ECO:0007669"/>
    <property type="project" value="UniProtKB-UniRule"/>
</dbReference>
<dbReference type="FunFam" id="1.10.287.1480:FF:000001">
    <property type="entry name" value="30S ribosomal protein S14"/>
    <property type="match status" value="1"/>
</dbReference>
<dbReference type="Gene3D" id="1.10.287.1480">
    <property type="match status" value="1"/>
</dbReference>
<dbReference type="HAMAP" id="MF_00537">
    <property type="entry name" value="Ribosomal_uS14_1"/>
    <property type="match status" value="1"/>
</dbReference>
<dbReference type="InterPro" id="IPR001209">
    <property type="entry name" value="Ribosomal_uS14"/>
</dbReference>
<dbReference type="InterPro" id="IPR023036">
    <property type="entry name" value="Ribosomal_uS14_bac/plastid"/>
</dbReference>
<dbReference type="InterPro" id="IPR018271">
    <property type="entry name" value="Ribosomal_uS14_CS"/>
</dbReference>
<dbReference type="NCBIfam" id="NF006477">
    <property type="entry name" value="PRK08881.1"/>
    <property type="match status" value="1"/>
</dbReference>
<dbReference type="PANTHER" id="PTHR19836">
    <property type="entry name" value="30S RIBOSOMAL PROTEIN S14"/>
    <property type="match status" value="1"/>
</dbReference>
<dbReference type="PANTHER" id="PTHR19836:SF19">
    <property type="entry name" value="SMALL RIBOSOMAL SUBUNIT PROTEIN US14M"/>
    <property type="match status" value="1"/>
</dbReference>
<dbReference type="Pfam" id="PF00253">
    <property type="entry name" value="Ribosomal_S14"/>
    <property type="match status" value="1"/>
</dbReference>
<dbReference type="SUPFAM" id="SSF57716">
    <property type="entry name" value="Glucocorticoid receptor-like (DNA-binding domain)"/>
    <property type="match status" value="1"/>
</dbReference>
<dbReference type="PROSITE" id="PS00527">
    <property type="entry name" value="RIBOSOMAL_S14"/>
    <property type="match status" value="1"/>
</dbReference>
<name>RS14_CITK8</name>
<accession>A8AQK3</accession>
<keyword id="KW-1185">Reference proteome</keyword>
<keyword id="KW-0687">Ribonucleoprotein</keyword>
<keyword id="KW-0689">Ribosomal protein</keyword>
<keyword id="KW-0694">RNA-binding</keyword>
<keyword id="KW-0699">rRNA-binding</keyword>
<organism>
    <name type="scientific">Citrobacter koseri (strain ATCC BAA-895 / CDC 4225-83 / SGSC4696)</name>
    <dbReference type="NCBI Taxonomy" id="290338"/>
    <lineage>
        <taxon>Bacteria</taxon>
        <taxon>Pseudomonadati</taxon>
        <taxon>Pseudomonadota</taxon>
        <taxon>Gammaproteobacteria</taxon>
        <taxon>Enterobacterales</taxon>
        <taxon>Enterobacteriaceae</taxon>
        <taxon>Citrobacter</taxon>
    </lineage>
</organism>
<comment type="function">
    <text evidence="1">Binds 16S rRNA, required for the assembly of 30S particles and may also be responsible for determining the conformation of the 16S rRNA at the A site.</text>
</comment>
<comment type="subunit">
    <text evidence="1">Part of the 30S ribosomal subunit. Contacts proteins S3 and S10.</text>
</comment>
<comment type="similarity">
    <text evidence="1">Belongs to the universal ribosomal protein uS14 family.</text>
</comment>
<feature type="chain" id="PRO_1000128364" description="Small ribosomal subunit protein uS14">
    <location>
        <begin position="1"/>
        <end position="101"/>
    </location>
</feature>